<gene>
    <name evidence="1" type="primary">cmk</name>
    <name type="ordered locus">PSEEN1491</name>
</gene>
<sequence>MSSQAPVITIDGPSGSGKGTVAGLLARELGWRLLDSGALYRLLAFNASNHGVDLTNEELLKALAAHLDVQFIAAEPGKLQQIILEGEDVSNVIRTETVGAGASMVASLPAVREALLQRQRAFREAPGLIADGRDMGTVVFPDAPLKVFLTASAEERARRRYLQLKGKGEDVSLSSLLDEIRARDERDTQRAVAPLKPAADAIQLDSTELSIEQVLQRIRSELALRDLI</sequence>
<name>KCY_PSEE4</name>
<accession>Q1ID99</accession>
<proteinExistence type="inferred from homology"/>
<feature type="chain" id="PRO_1000048251" description="Cytidylate kinase">
    <location>
        <begin position="1"/>
        <end position="228"/>
    </location>
</feature>
<feature type="binding site" evidence="1">
    <location>
        <begin position="12"/>
        <end position="20"/>
    </location>
    <ligand>
        <name>ATP</name>
        <dbReference type="ChEBI" id="CHEBI:30616"/>
    </ligand>
</feature>
<keyword id="KW-0067">ATP-binding</keyword>
<keyword id="KW-0963">Cytoplasm</keyword>
<keyword id="KW-0418">Kinase</keyword>
<keyword id="KW-0547">Nucleotide-binding</keyword>
<keyword id="KW-0808">Transferase</keyword>
<reference key="1">
    <citation type="journal article" date="2006" name="Nat. Biotechnol.">
        <title>Complete genome sequence of the entomopathogenic and metabolically versatile soil bacterium Pseudomonas entomophila.</title>
        <authorList>
            <person name="Vodovar N."/>
            <person name="Vallenet D."/>
            <person name="Cruveiller S."/>
            <person name="Rouy Z."/>
            <person name="Barbe V."/>
            <person name="Acosta C."/>
            <person name="Cattolico L."/>
            <person name="Jubin C."/>
            <person name="Lajus A."/>
            <person name="Segurens B."/>
            <person name="Vacherie B."/>
            <person name="Wincker P."/>
            <person name="Weissenbach J."/>
            <person name="Lemaitre B."/>
            <person name="Medigue C."/>
            <person name="Boccard F."/>
        </authorList>
    </citation>
    <scope>NUCLEOTIDE SEQUENCE [LARGE SCALE GENOMIC DNA]</scope>
    <source>
        <strain>L48</strain>
    </source>
</reference>
<comment type="catalytic activity">
    <reaction evidence="1">
        <text>CMP + ATP = CDP + ADP</text>
        <dbReference type="Rhea" id="RHEA:11600"/>
        <dbReference type="ChEBI" id="CHEBI:30616"/>
        <dbReference type="ChEBI" id="CHEBI:58069"/>
        <dbReference type="ChEBI" id="CHEBI:60377"/>
        <dbReference type="ChEBI" id="CHEBI:456216"/>
        <dbReference type="EC" id="2.7.4.25"/>
    </reaction>
</comment>
<comment type="catalytic activity">
    <reaction evidence="1">
        <text>dCMP + ATP = dCDP + ADP</text>
        <dbReference type="Rhea" id="RHEA:25094"/>
        <dbReference type="ChEBI" id="CHEBI:30616"/>
        <dbReference type="ChEBI" id="CHEBI:57566"/>
        <dbReference type="ChEBI" id="CHEBI:58593"/>
        <dbReference type="ChEBI" id="CHEBI:456216"/>
        <dbReference type="EC" id="2.7.4.25"/>
    </reaction>
</comment>
<comment type="subcellular location">
    <subcellularLocation>
        <location evidence="1">Cytoplasm</location>
    </subcellularLocation>
</comment>
<comment type="similarity">
    <text evidence="1">Belongs to the cytidylate kinase family. Type 1 subfamily.</text>
</comment>
<protein>
    <recommendedName>
        <fullName evidence="1">Cytidylate kinase</fullName>
        <shortName evidence="1">CK</shortName>
        <ecNumber evidence="1">2.7.4.25</ecNumber>
    </recommendedName>
    <alternativeName>
        <fullName evidence="1">Cytidine monophosphate kinase</fullName>
        <shortName evidence="1">CMP kinase</shortName>
    </alternativeName>
</protein>
<organism>
    <name type="scientific">Pseudomonas entomophila (strain L48)</name>
    <dbReference type="NCBI Taxonomy" id="384676"/>
    <lineage>
        <taxon>Bacteria</taxon>
        <taxon>Pseudomonadati</taxon>
        <taxon>Pseudomonadota</taxon>
        <taxon>Gammaproteobacteria</taxon>
        <taxon>Pseudomonadales</taxon>
        <taxon>Pseudomonadaceae</taxon>
        <taxon>Pseudomonas</taxon>
    </lineage>
</organism>
<evidence type="ECO:0000255" key="1">
    <source>
        <dbReference type="HAMAP-Rule" id="MF_00238"/>
    </source>
</evidence>
<dbReference type="EC" id="2.7.4.25" evidence="1"/>
<dbReference type="EMBL" id="CT573326">
    <property type="protein sequence ID" value="CAK14360.1"/>
    <property type="molecule type" value="Genomic_DNA"/>
</dbReference>
<dbReference type="RefSeq" id="WP_011532775.1">
    <property type="nucleotide sequence ID" value="NC_008027.1"/>
</dbReference>
<dbReference type="SMR" id="Q1ID99"/>
<dbReference type="STRING" id="384676.PSEEN1491"/>
<dbReference type="GeneID" id="32804743"/>
<dbReference type="KEGG" id="pen:PSEEN1491"/>
<dbReference type="eggNOG" id="COG0283">
    <property type="taxonomic scope" value="Bacteria"/>
</dbReference>
<dbReference type="HOGENOM" id="CLU_079959_2_0_6"/>
<dbReference type="OrthoDB" id="9807434at2"/>
<dbReference type="Proteomes" id="UP000000658">
    <property type="component" value="Chromosome"/>
</dbReference>
<dbReference type="GO" id="GO:0005829">
    <property type="term" value="C:cytosol"/>
    <property type="evidence" value="ECO:0007669"/>
    <property type="project" value="TreeGrafter"/>
</dbReference>
<dbReference type="GO" id="GO:0005524">
    <property type="term" value="F:ATP binding"/>
    <property type="evidence" value="ECO:0007669"/>
    <property type="project" value="UniProtKB-UniRule"/>
</dbReference>
<dbReference type="GO" id="GO:0036430">
    <property type="term" value="F:CMP kinase activity"/>
    <property type="evidence" value="ECO:0007669"/>
    <property type="project" value="RHEA"/>
</dbReference>
<dbReference type="GO" id="GO:0036431">
    <property type="term" value="F:dCMP kinase activity"/>
    <property type="evidence" value="ECO:0007669"/>
    <property type="project" value="RHEA"/>
</dbReference>
<dbReference type="GO" id="GO:0015949">
    <property type="term" value="P:nucleobase-containing small molecule interconversion"/>
    <property type="evidence" value="ECO:0007669"/>
    <property type="project" value="TreeGrafter"/>
</dbReference>
<dbReference type="GO" id="GO:0006220">
    <property type="term" value="P:pyrimidine nucleotide metabolic process"/>
    <property type="evidence" value="ECO:0007669"/>
    <property type="project" value="UniProtKB-UniRule"/>
</dbReference>
<dbReference type="CDD" id="cd02020">
    <property type="entry name" value="CMPK"/>
    <property type="match status" value="1"/>
</dbReference>
<dbReference type="FunFam" id="3.40.50.300:FF:000262">
    <property type="entry name" value="Cytidylate kinase"/>
    <property type="match status" value="1"/>
</dbReference>
<dbReference type="Gene3D" id="3.40.50.300">
    <property type="entry name" value="P-loop containing nucleotide triphosphate hydrolases"/>
    <property type="match status" value="1"/>
</dbReference>
<dbReference type="HAMAP" id="MF_00238">
    <property type="entry name" value="Cytidyl_kinase_type1"/>
    <property type="match status" value="1"/>
</dbReference>
<dbReference type="InterPro" id="IPR003136">
    <property type="entry name" value="Cytidylate_kin"/>
</dbReference>
<dbReference type="InterPro" id="IPR011994">
    <property type="entry name" value="Cytidylate_kinase_dom"/>
</dbReference>
<dbReference type="InterPro" id="IPR027417">
    <property type="entry name" value="P-loop_NTPase"/>
</dbReference>
<dbReference type="NCBIfam" id="TIGR00017">
    <property type="entry name" value="cmk"/>
    <property type="match status" value="1"/>
</dbReference>
<dbReference type="PANTHER" id="PTHR21299:SF2">
    <property type="entry name" value="CYTIDYLATE KINASE"/>
    <property type="match status" value="1"/>
</dbReference>
<dbReference type="PANTHER" id="PTHR21299">
    <property type="entry name" value="CYTIDYLATE KINASE/PANTOATE-BETA-ALANINE LIGASE"/>
    <property type="match status" value="1"/>
</dbReference>
<dbReference type="Pfam" id="PF02224">
    <property type="entry name" value="Cytidylate_kin"/>
    <property type="match status" value="1"/>
</dbReference>
<dbReference type="SUPFAM" id="SSF52540">
    <property type="entry name" value="P-loop containing nucleoside triphosphate hydrolases"/>
    <property type="match status" value="1"/>
</dbReference>